<comment type="function">
    <text>Binds to the inner side of the nucleosomal DNA thus altering the interaction between the DNA and the histone octamer. May be involved in the process which maintains transcribable genes in a unique chromatin conformation.</text>
</comment>
<comment type="subcellular location">
    <subcellularLocation>
        <location>Nucleus</location>
    </subcellularLocation>
</comment>
<comment type="miscellaneous">
    <text>There are two HMG-14 proteins in chicken: HMG-14A the major component, and HMG-14B the minor component.</text>
</comment>
<comment type="similarity">
    <text evidence="2">Belongs to the HMGN family.</text>
</comment>
<name>HMGN1_CHICK</name>
<organism>
    <name type="scientific">Gallus gallus</name>
    <name type="common">Chicken</name>
    <dbReference type="NCBI Taxonomy" id="9031"/>
    <lineage>
        <taxon>Eukaryota</taxon>
        <taxon>Metazoa</taxon>
        <taxon>Chordata</taxon>
        <taxon>Craniata</taxon>
        <taxon>Vertebrata</taxon>
        <taxon>Euteleostomi</taxon>
        <taxon>Archelosauria</taxon>
        <taxon>Archosauria</taxon>
        <taxon>Dinosauria</taxon>
        <taxon>Saurischia</taxon>
        <taxon>Theropoda</taxon>
        <taxon>Coelurosauria</taxon>
        <taxon>Aves</taxon>
        <taxon>Neognathae</taxon>
        <taxon>Galloanserae</taxon>
        <taxon>Galliformes</taxon>
        <taxon>Phasianidae</taxon>
        <taxon>Phasianinae</taxon>
        <taxon>Gallus</taxon>
    </lineage>
</organism>
<reference key="1">
    <citation type="journal article" date="1988" name="J. Biol. Chem.">
        <title>Cloning of the chicken chromosomal protein HMG-14 cDNA reveals a unique protein with a conserved DNA binding domain.</title>
        <authorList>
            <person name="Srikantha T."/>
            <person name="Landsman D."/>
            <person name="Bustin M."/>
        </authorList>
    </citation>
    <scope>NUCLEOTIDE SEQUENCE [MRNA]</scope>
</reference>
<reference key="2">
    <citation type="journal article" date="1990" name="J. Mol. Biol.">
        <title>A single copy gene for chicken chromosomal protein HMG-14b has evolutionarily conserved features, has lost one of its introns and codes for a rapidly evolving protein.</title>
        <authorList>
            <person name="Srikantha T."/>
            <person name="Landsman D."/>
            <person name="Bustin M."/>
        </authorList>
    </citation>
    <scope>NUCLEOTIDE SEQUENCE [GENOMIC DNA]</scope>
</reference>
<feature type="initiator methionine" description="Removed">
    <location>
        <position position="1"/>
    </location>
</feature>
<feature type="chain" id="PRO_0000206693" description="Non-histone chromosomal protein HMG-14B">
    <location>
        <begin position="2"/>
        <end position="103"/>
    </location>
</feature>
<feature type="region of interest" description="Disordered" evidence="1">
    <location>
        <begin position="1"/>
        <end position="103"/>
    </location>
</feature>
<feature type="compositionally biased region" description="Basic and acidic residues" evidence="1">
    <location>
        <begin position="29"/>
        <end position="50"/>
    </location>
</feature>
<feature type="compositionally biased region" description="Basic residues" evidence="1">
    <location>
        <begin position="51"/>
        <end position="60"/>
    </location>
</feature>
<feature type="compositionally biased region" description="Basic and acidic residues" evidence="1">
    <location>
        <begin position="94"/>
        <end position="103"/>
    </location>
</feature>
<protein>
    <recommendedName>
        <fullName>Non-histone chromosomal protein HMG-14B</fullName>
    </recommendedName>
</protein>
<dbReference type="EMBL" id="M20817">
    <property type="protein sequence ID" value="AAB59965.1"/>
    <property type="molecule type" value="mRNA"/>
</dbReference>
<dbReference type="EMBL" id="X52707">
    <property type="protein sequence ID" value="CAA36932.1"/>
    <property type="molecule type" value="Genomic_DNA"/>
</dbReference>
<dbReference type="EMBL" id="X52708">
    <property type="protein sequence ID" value="CAA36932.1"/>
    <property type="status" value="JOINED"/>
    <property type="molecule type" value="Genomic_DNA"/>
</dbReference>
<dbReference type="PIR" id="S08180">
    <property type="entry name" value="S08180"/>
</dbReference>
<dbReference type="FunCoup" id="P12274">
    <property type="interactions" value="1637"/>
</dbReference>
<dbReference type="STRING" id="9031.ENSGALP00000062811"/>
<dbReference type="VEuPathDB" id="HostDB:geneid_395999"/>
<dbReference type="eggNOG" id="ENOG502S7UM">
    <property type="taxonomic scope" value="Eukaryota"/>
</dbReference>
<dbReference type="InParanoid" id="P12274"/>
<dbReference type="PhylomeDB" id="P12274"/>
<dbReference type="PRO" id="PR:P12274"/>
<dbReference type="Proteomes" id="UP000000539">
    <property type="component" value="Unassembled WGS sequence"/>
</dbReference>
<dbReference type="GO" id="GO:0000785">
    <property type="term" value="C:chromatin"/>
    <property type="evidence" value="ECO:0007669"/>
    <property type="project" value="InterPro"/>
</dbReference>
<dbReference type="GO" id="GO:0005634">
    <property type="term" value="C:nucleus"/>
    <property type="evidence" value="ECO:0000318"/>
    <property type="project" value="GO_Central"/>
</dbReference>
<dbReference type="GO" id="GO:0003682">
    <property type="term" value="F:chromatin binding"/>
    <property type="evidence" value="ECO:0000318"/>
    <property type="project" value="GO_Central"/>
</dbReference>
<dbReference type="GO" id="GO:0031492">
    <property type="term" value="F:nucleosomal DNA binding"/>
    <property type="evidence" value="ECO:0007669"/>
    <property type="project" value="InterPro"/>
</dbReference>
<dbReference type="GO" id="GO:0006325">
    <property type="term" value="P:chromatin organization"/>
    <property type="evidence" value="ECO:0000318"/>
    <property type="project" value="GO_Central"/>
</dbReference>
<dbReference type="InterPro" id="IPR000079">
    <property type="entry name" value="HMGN_fam"/>
</dbReference>
<dbReference type="PANTHER" id="PTHR23087:SF12">
    <property type="entry name" value="NON-HISTONE CHROMOSOMAL PROTEIN HMG-14"/>
    <property type="match status" value="1"/>
</dbReference>
<dbReference type="PANTHER" id="PTHR23087">
    <property type="entry name" value="NONHISTONE CHROMOSOMAL PROTEIN HMG"/>
    <property type="match status" value="1"/>
</dbReference>
<dbReference type="Pfam" id="PF01101">
    <property type="entry name" value="HMG14_17"/>
    <property type="match status" value="1"/>
</dbReference>
<dbReference type="PRINTS" id="PR00925">
    <property type="entry name" value="NONHISHMG17"/>
</dbReference>
<dbReference type="SMART" id="SM00527">
    <property type="entry name" value="HMG17"/>
    <property type="match status" value="1"/>
</dbReference>
<dbReference type="PROSITE" id="PS00355">
    <property type="entry name" value="HMG14_17"/>
    <property type="match status" value="1"/>
</dbReference>
<keyword id="KW-0238">DNA-binding</keyword>
<keyword id="KW-0539">Nucleus</keyword>
<keyword id="KW-1185">Reference proteome</keyword>
<accession>P12274</accession>
<sequence length="103" mass="11180">MPKRKVAASRGGREEVPKRRSARLSAKPVPDKAEPKAKALAAKDKSENKKAQSKGKKGPKGKQTEETNQEQIKDNLPAENGETKSEETPASDAAVEKEEVKSE</sequence>
<proteinExistence type="inferred from homology"/>
<evidence type="ECO:0000256" key="1">
    <source>
        <dbReference type="SAM" id="MobiDB-lite"/>
    </source>
</evidence>
<evidence type="ECO:0000305" key="2"/>
<gene>
    <name type="primary">HMG14</name>
</gene>